<protein>
    <recommendedName>
        <fullName evidence="1">Large ribosomal subunit protein bL21</fullName>
    </recommendedName>
    <alternativeName>
        <fullName evidence="2">50S ribosomal protein L21</fullName>
    </alternativeName>
</protein>
<organism>
    <name type="scientific">Azobacteroides pseudotrichonymphae genomovar. CFP2</name>
    <dbReference type="NCBI Taxonomy" id="511995"/>
    <lineage>
        <taxon>Bacteria</taxon>
        <taxon>Pseudomonadati</taxon>
        <taxon>Bacteroidota</taxon>
        <taxon>Bacteroidia</taxon>
        <taxon>Bacteroidales</taxon>
        <taxon>Candidatus Azobacteroides</taxon>
    </lineage>
</organism>
<name>RL21_AZOPC</name>
<reference key="1">
    <citation type="journal article" date="2008" name="Science">
        <title>Genome of an endosymbiont coupling N2 fixation to cellulolysis within RT protist cells in termite gut.</title>
        <authorList>
            <person name="Hongoh Y."/>
            <person name="Sharma V.K."/>
            <person name="Prakash T."/>
            <person name="Noda S."/>
            <person name="Toh H."/>
            <person name="Taylor T.D."/>
            <person name="Kudo T."/>
            <person name="Sakaki Y."/>
            <person name="Toyoda A."/>
            <person name="Hattori M."/>
            <person name="Ohkuma M."/>
        </authorList>
    </citation>
    <scope>NUCLEOTIDE SEQUENCE [LARGE SCALE GENOMIC DNA]</scope>
</reference>
<comment type="function">
    <text evidence="1">This protein binds to 23S rRNA in the presence of protein L20.</text>
</comment>
<comment type="subunit">
    <text evidence="1">Part of the 50S ribosomal subunit. Contacts protein L20.</text>
</comment>
<comment type="similarity">
    <text evidence="1">Belongs to the bacterial ribosomal protein bL21 family.</text>
</comment>
<accession>B6YRH7</accession>
<sequence>MYAIVEIQGQQFKVEKDQKLYVNHFEAKEGVPIIFNKVLLVDNDGFITIGNPLIKGAKVEVSILRSLVKGDKILVFHKKRRKGYRKLNGHRQQFSQILIRNILI</sequence>
<proteinExistence type="inferred from homology"/>
<evidence type="ECO:0000255" key="1">
    <source>
        <dbReference type="HAMAP-Rule" id="MF_01363"/>
    </source>
</evidence>
<evidence type="ECO:0000305" key="2"/>
<gene>
    <name evidence="1" type="primary">rplU</name>
    <name type="ordered locus">CFPG_536</name>
</gene>
<dbReference type="EMBL" id="AP010656">
    <property type="protein sequence ID" value="BAG83799.1"/>
    <property type="molecule type" value="Genomic_DNA"/>
</dbReference>
<dbReference type="RefSeq" id="WP_012573560.1">
    <property type="nucleotide sequence ID" value="NC_011565.1"/>
</dbReference>
<dbReference type="SMR" id="B6YRH7"/>
<dbReference type="STRING" id="511995.CFPG_536"/>
<dbReference type="KEGG" id="aps:CFPG_536"/>
<dbReference type="eggNOG" id="COG0261">
    <property type="taxonomic scope" value="Bacteria"/>
</dbReference>
<dbReference type="HOGENOM" id="CLU_061463_3_2_10"/>
<dbReference type="OrthoDB" id="9813334at2"/>
<dbReference type="Proteomes" id="UP000000723">
    <property type="component" value="Chromosome"/>
</dbReference>
<dbReference type="GO" id="GO:0005737">
    <property type="term" value="C:cytoplasm"/>
    <property type="evidence" value="ECO:0007669"/>
    <property type="project" value="UniProtKB-ARBA"/>
</dbReference>
<dbReference type="GO" id="GO:1990904">
    <property type="term" value="C:ribonucleoprotein complex"/>
    <property type="evidence" value="ECO:0007669"/>
    <property type="project" value="UniProtKB-KW"/>
</dbReference>
<dbReference type="GO" id="GO:0005840">
    <property type="term" value="C:ribosome"/>
    <property type="evidence" value="ECO:0007669"/>
    <property type="project" value="UniProtKB-KW"/>
</dbReference>
<dbReference type="GO" id="GO:0019843">
    <property type="term" value="F:rRNA binding"/>
    <property type="evidence" value="ECO:0007669"/>
    <property type="project" value="UniProtKB-UniRule"/>
</dbReference>
<dbReference type="GO" id="GO:0003735">
    <property type="term" value="F:structural constituent of ribosome"/>
    <property type="evidence" value="ECO:0007669"/>
    <property type="project" value="InterPro"/>
</dbReference>
<dbReference type="GO" id="GO:0006412">
    <property type="term" value="P:translation"/>
    <property type="evidence" value="ECO:0007669"/>
    <property type="project" value="UniProtKB-UniRule"/>
</dbReference>
<dbReference type="HAMAP" id="MF_01363">
    <property type="entry name" value="Ribosomal_bL21"/>
    <property type="match status" value="1"/>
</dbReference>
<dbReference type="InterPro" id="IPR028909">
    <property type="entry name" value="bL21-like"/>
</dbReference>
<dbReference type="InterPro" id="IPR036164">
    <property type="entry name" value="bL21-like_sf"/>
</dbReference>
<dbReference type="InterPro" id="IPR001787">
    <property type="entry name" value="Ribosomal_bL21"/>
</dbReference>
<dbReference type="NCBIfam" id="TIGR00061">
    <property type="entry name" value="L21"/>
    <property type="match status" value="1"/>
</dbReference>
<dbReference type="PANTHER" id="PTHR21349">
    <property type="entry name" value="50S RIBOSOMAL PROTEIN L21"/>
    <property type="match status" value="1"/>
</dbReference>
<dbReference type="PANTHER" id="PTHR21349:SF0">
    <property type="entry name" value="LARGE RIBOSOMAL SUBUNIT PROTEIN BL21M"/>
    <property type="match status" value="1"/>
</dbReference>
<dbReference type="Pfam" id="PF00829">
    <property type="entry name" value="Ribosomal_L21p"/>
    <property type="match status" value="1"/>
</dbReference>
<dbReference type="SUPFAM" id="SSF141091">
    <property type="entry name" value="L21p-like"/>
    <property type="match status" value="1"/>
</dbReference>
<keyword id="KW-1185">Reference proteome</keyword>
<keyword id="KW-0687">Ribonucleoprotein</keyword>
<keyword id="KW-0689">Ribosomal protein</keyword>
<keyword id="KW-0694">RNA-binding</keyword>
<keyword id="KW-0699">rRNA-binding</keyword>
<feature type="chain" id="PRO_1000143752" description="Large ribosomal subunit protein bL21">
    <location>
        <begin position="1"/>
        <end position="104"/>
    </location>
</feature>